<keyword id="KW-0131">Cell cycle</keyword>
<keyword id="KW-0132">Cell division</keyword>
<keyword id="KW-1185">Reference proteome</keyword>
<keyword id="KW-0717">Septation</keyword>
<feature type="chain" id="PRO_1000047867" description="Probable septum site-determining protein MinC">
    <location>
        <begin position="1"/>
        <end position="231"/>
    </location>
</feature>
<feature type="region of interest" description="Disordered" evidence="2">
    <location>
        <begin position="102"/>
        <end position="125"/>
    </location>
</feature>
<gene>
    <name evidence="1" type="primary">minC</name>
    <name type="ordered locus">SSON_1165</name>
</gene>
<comment type="function">
    <text evidence="1">Cell division inhibitor that blocks the formation of polar Z ring septums. Rapidly oscillates between the poles of the cell to destabilize FtsZ filaments that have formed before they mature into polar Z rings. Prevents FtsZ polymerization.</text>
</comment>
<comment type="subunit">
    <text evidence="1">Interacts with MinD and FtsZ.</text>
</comment>
<comment type="similarity">
    <text evidence="1">Belongs to the MinC family.</text>
</comment>
<reference key="1">
    <citation type="journal article" date="2005" name="Nucleic Acids Res.">
        <title>Genome dynamics and diversity of Shigella species, the etiologic agents of bacillary dysentery.</title>
        <authorList>
            <person name="Yang F."/>
            <person name="Yang J."/>
            <person name="Zhang X."/>
            <person name="Chen L."/>
            <person name="Jiang Y."/>
            <person name="Yan Y."/>
            <person name="Tang X."/>
            <person name="Wang J."/>
            <person name="Xiong Z."/>
            <person name="Dong J."/>
            <person name="Xue Y."/>
            <person name="Zhu Y."/>
            <person name="Xu X."/>
            <person name="Sun L."/>
            <person name="Chen S."/>
            <person name="Nie H."/>
            <person name="Peng J."/>
            <person name="Xu J."/>
            <person name="Wang Y."/>
            <person name="Yuan Z."/>
            <person name="Wen Y."/>
            <person name="Yao Z."/>
            <person name="Shen Y."/>
            <person name="Qiang B."/>
            <person name="Hou Y."/>
            <person name="Yu J."/>
            <person name="Jin Q."/>
        </authorList>
    </citation>
    <scope>NUCLEOTIDE SEQUENCE [LARGE SCALE GENOMIC DNA]</scope>
    <source>
        <strain>Ss046</strain>
    </source>
</reference>
<accession>Q3Z2X3</accession>
<protein>
    <recommendedName>
        <fullName evidence="1">Probable septum site-determining protein MinC</fullName>
    </recommendedName>
</protein>
<dbReference type="EMBL" id="CP000038">
    <property type="protein sequence ID" value="AAZ87889.1"/>
    <property type="molecule type" value="Genomic_DNA"/>
</dbReference>
<dbReference type="RefSeq" id="WP_000072536.1">
    <property type="nucleotide sequence ID" value="NC_007384.1"/>
</dbReference>
<dbReference type="SMR" id="Q3Z2X3"/>
<dbReference type="GeneID" id="93776258"/>
<dbReference type="KEGG" id="ssn:SSON_1165"/>
<dbReference type="HOGENOM" id="CLU_067812_0_1_6"/>
<dbReference type="Proteomes" id="UP000002529">
    <property type="component" value="Chromosome"/>
</dbReference>
<dbReference type="GO" id="GO:0000902">
    <property type="term" value="P:cell morphogenesis"/>
    <property type="evidence" value="ECO:0007669"/>
    <property type="project" value="InterPro"/>
</dbReference>
<dbReference type="GO" id="GO:0000917">
    <property type="term" value="P:division septum assembly"/>
    <property type="evidence" value="ECO:0007669"/>
    <property type="project" value="UniProtKB-KW"/>
</dbReference>
<dbReference type="GO" id="GO:0051302">
    <property type="term" value="P:regulation of cell division"/>
    <property type="evidence" value="ECO:0007669"/>
    <property type="project" value="InterPro"/>
</dbReference>
<dbReference type="GO" id="GO:1901891">
    <property type="term" value="P:regulation of cell septum assembly"/>
    <property type="evidence" value="ECO:0007669"/>
    <property type="project" value="InterPro"/>
</dbReference>
<dbReference type="FunFam" id="2.160.20.70:FF:000002">
    <property type="entry name" value="Probable septum site-determining protein MinC"/>
    <property type="match status" value="1"/>
</dbReference>
<dbReference type="Gene3D" id="2.160.20.70">
    <property type="match status" value="1"/>
</dbReference>
<dbReference type="Gene3D" id="3.30.70.260">
    <property type="match status" value="1"/>
</dbReference>
<dbReference type="HAMAP" id="MF_00267">
    <property type="entry name" value="MinC"/>
    <property type="match status" value="1"/>
</dbReference>
<dbReference type="InterPro" id="IPR016098">
    <property type="entry name" value="CAP/MinC_C"/>
</dbReference>
<dbReference type="InterPro" id="IPR013033">
    <property type="entry name" value="MinC"/>
</dbReference>
<dbReference type="InterPro" id="IPR036145">
    <property type="entry name" value="MinC_C_sf"/>
</dbReference>
<dbReference type="InterPro" id="IPR007874">
    <property type="entry name" value="MinC_N"/>
</dbReference>
<dbReference type="InterPro" id="IPR005526">
    <property type="entry name" value="Septum_form_inhib_MinC_C"/>
</dbReference>
<dbReference type="NCBIfam" id="TIGR01222">
    <property type="entry name" value="minC"/>
    <property type="match status" value="1"/>
</dbReference>
<dbReference type="PANTHER" id="PTHR34108">
    <property type="entry name" value="SEPTUM SITE-DETERMINING PROTEIN MINC"/>
    <property type="match status" value="1"/>
</dbReference>
<dbReference type="PANTHER" id="PTHR34108:SF1">
    <property type="entry name" value="SEPTUM SITE-DETERMINING PROTEIN MINC"/>
    <property type="match status" value="1"/>
</dbReference>
<dbReference type="Pfam" id="PF03775">
    <property type="entry name" value="MinC_C"/>
    <property type="match status" value="1"/>
</dbReference>
<dbReference type="Pfam" id="PF05209">
    <property type="entry name" value="MinC_N"/>
    <property type="match status" value="1"/>
</dbReference>
<dbReference type="SUPFAM" id="SSF63848">
    <property type="entry name" value="Cell-division inhibitor MinC, C-terminal domain"/>
    <property type="match status" value="1"/>
</dbReference>
<organism>
    <name type="scientific">Shigella sonnei (strain Ss046)</name>
    <dbReference type="NCBI Taxonomy" id="300269"/>
    <lineage>
        <taxon>Bacteria</taxon>
        <taxon>Pseudomonadati</taxon>
        <taxon>Pseudomonadota</taxon>
        <taxon>Gammaproteobacteria</taxon>
        <taxon>Enterobacterales</taxon>
        <taxon>Enterobacteriaceae</taxon>
        <taxon>Shigella</taxon>
    </lineage>
</organism>
<proteinExistence type="inferred from homology"/>
<evidence type="ECO:0000255" key="1">
    <source>
        <dbReference type="HAMAP-Rule" id="MF_00267"/>
    </source>
</evidence>
<evidence type="ECO:0000256" key="2">
    <source>
        <dbReference type="SAM" id="MobiDB-lite"/>
    </source>
</evidence>
<sequence length="231" mass="24745">MSNTPIELKGSSFTLSVVHLHEAEPKVIHQALEDKIAQAPAFLKHAPVVLNVSALEDPVNWSAMHKAVSATGLRVIGVSGCKDAQLKAEIEKMGLPILTEGKEKAPRPAPAPQAPAQNTTPVTKTRLIDTPVRSGQRIYAPQCDLIVTSHVSAGAELIADGNIHVYGMMRGRALAGASGDRETQIFCTNLMAELVSIAGEYWLSDQIPAEFYGKAARLQLVENALTVQPLN</sequence>
<name>MINC_SHISS</name>